<feature type="chain" id="PRO_1000019137" description="Molybdenum cofactor guanylyltransferase">
    <location>
        <begin position="1"/>
        <end position="199"/>
    </location>
</feature>
<feature type="binding site" evidence="1">
    <location>
        <begin position="12"/>
        <end position="14"/>
    </location>
    <ligand>
        <name>GTP</name>
        <dbReference type="ChEBI" id="CHEBI:37565"/>
    </ligand>
</feature>
<feature type="binding site" evidence="1">
    <location>
        <position position="25"/>
    </location>
    <ligand>
        <name>GTP</name>
        <dbReference type="ChEBI" id="CHEBI:37565"/>
    </ligand>
</feature>
<feature type="binding site" evidence="1">
    <location>
        <position position="53"/>
    </location>
    <ligand>
        <name>GTP</name>
        <dbReference type="ChEBI" id="CHEBI:37565"/>
    </ligand>
</feature>
<feature type="binding site" evidence="1">
    <location>
        <position position="71"/>
    </location>
    <ligand>
        <name>GTP</name>
        <dbReference type="ChEBI" id="CHEBI:37565"/>
    </ligand>
</feature>
<feature type="binding site" evidence="1">
    <location>
        <position position="101"/>
    </location>
    <ligand>
        <name>GTP</name>
        <dbReference type="ChEBI" id="CHEBI:37565"/>
    </ligand>
</feature>
<feature type="binding site" evidence="1">
    <location>
        <position position="101"/>
    </location>
    <ligand>
        <name>Mg(2+)</name>
        <dbReference type="ChEBI" id="CHEBI:18420"/>
    </ligand>
</feature>
<evidence type="ECO:0000255" key="1">
    <source>
        <dbReference type="HAMAP-Rule" id="MF_00316"/>
    </source>
</evidence>
<name>MOBA_CUPNH</name>
<organism>
    <name type="scientific">Cupriavidus necator (strain ATCC 17699 / DSM 428 / KCTC 22496 / NCIMB 10442 / H16 / Stanier 337)</name>
    <name type="common">Ralstonia eutropha</name>
    <dbReference type="NCBI Taxonomy" id="381666"/>
    <lineage>
        <taxon>Bacteria</taxon>
        <taxon>Pseudomonadati</taxon>
        <taxon>Pseudomonadota</taxon>
        <taxon>Betaproteobacteria</taxon>
        <taxon>Burkholderiales</taxon>
        <taxon>Burkholderiaceae</taxon>
        <taxon>Cupriavidus</taxon>
    </lineage>
</organism>
<gene>
    <name evidence="1" type="primary">mobA</name>
    <name type="ordered locus">H16_A2582</name>
</gene>
<proteinExistence type="inferred from homology"/>
<protein>
    <recommendedName>
        <fullName evidence="1">Molybdenum cofactor guanylyltransferase</fullName>
        <shortName evidence="1">MoCo guanylyltransferase</shortName>
        <ecNumber evidence="1">2.7.7.77</ecNumber>
    </recommendedName>
    <alternativeName>
        <fullName evidence="1">GTP:molybdopterin guanylyltransferase</fullName>
    </alternativeName>
    <alternativeName>
        <fullName evidence="1">Mo-MPT guanylyltransferase</fullName>
    </alternativeName>
    <alternativeName>
        <fullName evidence="1">Molybdopterin guanylyltransferase</fullName>
    </alternativeName>
    <alternativeName>
        <fullName evidence="1">Molybdopterin-guanine dinucleotide synthase</fullName>
        <shortName evidence="1">MGD synthase</shortName>
    </alternativeName>
</protein>
<dbReference type="EC" id="2.7.7.77" evidence="1"/>
<dbReference type="EMBL" id="AM260479">
    <property type="protein sequence ID" value="CAJ93665.1"/>
    <property type="molecule type" value="Genomic_DNA"/>
</dbReference>
<dbReference type="RefSeq" id="WP_010814665.1">
    <property type="nucleotide sequence ID" value="NZ_CP039287.1"/>
</dbReference>
<dbReference type="SMR" id="Q0K8K6"/>
<dbReference type="STRING" id="381666.H16_A2582"/>
<dbReference type="KEGG" id="reh:H16_A2582"/>
<dbReference type="eggNOG" id="COG0746">
    <property type="taxonomic scope" value="Bacteria"/>
</dbReference>
<dbReference type="HOGENOM" id="CLU_055597_5_1_4"/>
<dbReference type="OrthoDB" id="9788394at2"/>
<dbReference type="Proteomes" id="UP000008210">
    <property type="component" value="Chromosome 1"/>
</dbReference>
<dbReference type="GO" id="GO:0005737">
    <property type="term" value="C:cytoplasm"/>
    <property type="evidence" value="ECO:0007669"/>
    <property type="project" value="UniProtKB-SubCell"/>
</dbReference>
<dbReference type="GO" id="GO:0005525">
    <property type="term" value="F:GTP binding"/>
    <property type="evidence" value="ECO:0007669"/>
    <property type="project" value="UniProtKB-UniRule"/>
</dbReference>
<dbReference type="GO" id="GO:0046872">
    <property type="term" value="F:metal ion binding"/>
    <property type="evidence" value="ECO:0007669"/>
    <property type="project" value="UniProtKB-KW"/>
</dbReference>
<dbReference type="GO" id="GO:0061603">
    <property type="term" value="F:molybdenum cofactor guanylyltransferase activity"/>
    <property type="evidence" value="ECO:0007669"/>
    <property type="project" value="UniProtKB-EC"/>
</dbReference>
<dbReference type="GO" id="GO:1902758">
    <property type="term" value="P:bis(molybdopterin guanine dinucleotide)molybdenum biosynthetic process"/>
    <property type="evidence" value="ECO:0007669"/>
    <property type="project" value="TreeGrafter"/>
</dbReference>
<dbReference type="CDD" id="cd02503">
    <property type="entry name" value="MobA"/>
    <property type="match status" value="1"/>
</dbReference>
<dbReference type="Gene3D" id="3.90.550.10">
    <property type="entry name" value="Spore Coat Polysaccharide Biosynthesis Protein SpsA, Chain A"/>
    <property type="match status" value="1"/>
</dbReference>
<dbReference type="HAMAP" id="MF_00316">
    <property type="entry name" value="MobA"/>
    <property type="match status" value="1"/>
</dbReference>
<dbReference type="InterPro" id="IPR025877">
    <property type="entry name" value="MobA-like_NTP_Trfase"/>
</dbReference>
<dbReference type="InterPro" id="IPR013482">
    <property type="entry name" value="Molybde_CF_guanTrfase"/>
</dbReference>
<dbReference type="InterPro" id="IPR029044">
    <property type="entry name" value="Nucleotide-diphossugar_trans"/>
</dbReference>
<dbReference type="NCBIfam" id="TIGR02665">
    <property type="entry name" value="molyb_mobA"/>
    <property type="match status" value="1"/>
</dbReference>
<dbReference type="PANTHER" id="PTHR19136">
    <property type="entry name" value="MOLYBDENUM COFACTOR GUANYLYLTRANSFERASE"/>
    <property type="match status" value="1"/>
</dbReference>
<dbReference type="PANTHER" id="PTHR19136:SF81">
    <property type="entry name" value="MOLYBDENUM COFACTOR GUANYLYLTRANSFERASE"/>
    <property type="match status" value="1"/>
</dbReference>
<dbReference type="Pfam" id="PF12804">
    <property type="entry name" value="NTP_transf_3"/>
    <property type="match status" value="1"/>
</dbReference>
<dbReference type="SUPFAM" id="SSF53448">
    <property type="entry name" value="Nucleotide-diphospho-sugar transferases"/>
    <property type="match status" value="1"/>
</dbReference>
<sequence length="199" mass="21196">MIARDDITGLILAGGRGSRMGGTDKGLQPLHGTPMAMHTMMRLTPQVGGLMINANRNLAAYESFGVPVYTDTVPDFAGPLAGMLAGLEQCATPWMVTAPCDSPFLPTDLVARLAQAIEAEGADLAIPVTLDEDGRRQTQPVFCLMPVSALDSLVAYLSGGGRKIETWAASHRLAEVLFDDAAAFANINTLDELRTHETR</sequence>
<accession>Q0K8K6</accession>
<keyword id="KW-0963">Cytoplasm</keyword>
<keyword id="KW-0342">GTP-binding</keyword>
<keyword id="KW-0460">Magnesium</keyword>
<keyword id="KW-0479">Metal-binding</keyword>
<keyword id="KW-0501">Molybdenum cofactor biosynthesis</keyword>
<keyword id="KW-0547">Nucleotide-binding</keyword>
<keyword id="KW-1185">Reference proteome</keyword>
<keyword id="KW-0808">Transferase</keyword>
<reference key="1">
    <citation type="journal article" date="2006" name="Nat. Biotechnol.">
        <title>Genome sequence of the bioplastic-producing 'Knallgas' bacterium Ralstonia eutropha H16.</title>
        <authorList>
            <person name="Pohlmann A."/>
            <person name="Fricke W.F."/>
            <person name="Reinecke F."/>
            <person name="Kusian B."/>
            <person name="Liesegang H."/>
            <person name="Cramm R."/>
            <person name="Eitinger T."/>
            <person name="Ewering C."/>
            <person name="Poetter M."/>
            <person name="Schwartz E."/>
            <person name="Strittmatter A."/>
            <person name="Voss I."/>
            <person name="Gottschalk G."/>
            <person name="Steinbuechel A."/>
            <person name="Friedrich B."/>
            <person name="Bowien B."/>
        </authorList>
    </citation>
    <scope>NUCLEOTIDE SEQUENCE [LARGE SCALE GENOMIC DNA]</scope>
    <source>
        <strain>ATCC 17699 / DSM 428 / KCTC 22496 / NCIMB 10442 / H16 / Stanier 337</strain>
    </source>
</reference>
<comment type="function">
    <text evidence="1">Transfers a GMP moiety from GTP to Mo-molybdopterin (Mo-MPT) cofactor (Moco or molybdenum cofactor) to form Mo-molybdopterin guanine dinucleotide (Mo-MGD) cofactor.</text>
</comment>
<comment type="catalytic activity">
    <reaction evidence="1">
        <text>Mo-molybdopterin + GTP + H(+) = Mo-molybdopterin guanine dinucleotide + diphosphate</text>
        <dbReference type="Rhea" id="RHEA:34243"/>
        <dbReference type="ChEBI" id="CHEBI:15378"/>
        <dbReference type="ChEBI" id="CHEBI:33019"/>
        <dbReference type="ChEBI" id="CHEBI:37565"/>
        <dbReference type="ChEBI" id="CHEBI:71302"/>
        <dbReference type="ChEBI" id="CHEBI:71310"/>
        <dbReference type="EC" id="2.7.7.77"/>
    </reaction>
</comment>
<comment type="cofactor">
    <cofactor evidence="1">
        <name>Mg(2+)</name>
        <dbReference type="ChEBI" id="CHEBI:18420"/>
    </cofactor>
</comment>
<comment type="subunit">
    <text evidence="1">Monomer.</text>
</comment>
<comment type="subcellular location">
    <subcellularLocation>
        <location evidence="1">Cytoplasm</location>
    </subcellularLocation>
</comment>
<comment type="domain">
    <text evidence="1">The N-terminal domain determines nucleotide recognition and specific binding, while the C-terminal domain determines the specific binding to the target protein.</text>
</comment>
<comment type="similarity">
    <text evidence="1">Belongs to the MobA family.</text>
</comment>